<comment type="function">
    <text evidence="1">This enzyme is involved in nucleotide metabolism: it produces dUMP, the immediate precursor of thymidine nucleotides and it decreases the intracellular concentration of dUTP so that uracil cannot be incorporated into DNA.</text>
</comment>
<comment type="catalytic activity">
    <reaction evidence="1">
        <text>dUTP + H2O = dUMP + diphosphate + H(+)</text>
        <dbReference type="Rhea" id="RHEA:10248"/>
        <dbReference type="ChEBI" id="CHEBI:15377"/>
        <dbReference type="ChEBI" id="CHEBI:15378"/>
        <dbReference type="ChEBI" id="CHEBI:33019"/>
        <dbReference type="ChEBI" id="CHEBI:61555"/>
        <dbReference type="ChEBI" id="CHEBI:246422"/>
        <dbReference type="EC" id="3.6.1.23"/>
    </reaction>
</comment>
<comment type="cofactor">
    <cofactor evidence="1">
        <name>Mg(2+)</name>
        <dbReference type="ChEBI" id="CHEBI:18420"/>
    </cofactor>
</comment>
<comment type="pathway">
    <text evidence="1">Pyrimidine metabolism; dUMP biosynthesis; dUMP from dCTP (dUTP route): step 2/2.</text>
</comment>
<comment type="similarity">
    <text evidence="1">Belongs to the dUTPase family.</text>
</comment>
<organism>
    <name type="scientific">Bordetella avium (strain 197N)</name>
    <dbReference type="NCBI Taxonomy" id="360910"/>
    <lineage>
        <taxon>Bacteria</taxon>
        <taxon>Pseudomonadati</taxon>
        <taxon>Pseudomonadota</taxon>
        <taxon>Betaproteobacteria</taxon>
        <taxon>Burkholderiales</taxon>
        <taxon>Alcaligenaceae</taxon>
        <taxon>Bordetella</taxon>
    </lineage>
</organism>
<accession>Q2L2L5</accession>
<name>DUT_BORA1</name>
<evidence type="ECO:0000255" key="1">
    <source>
        <dbReference type="HAMAP-Rule" id="MF_00116"/>
    </source>
</evidence>
<protein>
    <recommendedName>
        <fullName evidence="1">Deoxyuridine 5'-triphosphate nucleotidohydrolase</fullName>
        <shortName evidence="1">dUTPase</shortName>
        <ecNumber evidence="1">3.6.1.23</ecNumber>
    </recommendedName>
    <alternativeName>
        <fullName evidence="1">dUTP pyrophosphatase</fullName>
    </alternativeName>
</protein>
<sequence>MKSVDLKILDARMRDYLPTYATPGSAGLDLRACIDKAITLEPGATTLVPTGLAIHVADPGYAAIILPRSGLGHKHGIVLGNLVGLIDSDYQGQLMVSTWNRGQTAFTLEPMERLAQLVIVPVQQVSFNVVDEFGASERGAGGFGSTGRS</sequence>
<dbReference type="EC" id="3.6.1.23" evidence="1"/>
<dbReference type="EMBL" id="AM167904">
    <property type="protein sequence ID" value="CAJ49011.1"/>
    <property type="molecule type" value="Genomic_DNA"/>
</dbReference>
<dbReference type="RefSeq" id="WP_012417083.1">
    <property type="nucleotide sequence ID" value="NC_010645.1"/>
</dbReference>
<dbReference type="SMR" id="Q2L2L5"/>
<dbReference type="STRING" id="360910.BAV1402"/>
<dbReference type="GeneID" id="92935473"/>
<dbReference type="KEGG" id="bav:BAV1402"/>
<dbReference type="eggNOG" id="COG0756">
    <property type="taxonomic scope" value="Bacteria"/>
</dbReference>
<dbReference type="HOGENOM" id="CLU_068508_1_1_4"/>
<dbReference type="OrthoDB" id="9809956at2"/>
<dbReference type="UniPathway" id="UPA00610">
    <property type="reaction ID" value="UER00666"/>
</dbReference>
<dbReference type="Proteomes" id="UP000001977">
    <property type="component" value="Chromosome"/>
</dbReference>
<dbReference type="GO" id="GO:0004170">
    <property type="term" value="F:dUTP diphosphatase activity"/>
    <property type="evidence" value="ECO:0007669"/>
    <property type="project" value="UniProtKB-UniRule"/>
</dbReference>
<dbReference type="GO" id="GO:0000287">
    <property type="term" value="F:magnesium ion binding"/>
    <property type="evidence" value="ECO:0007669"/>
    <property type="project" value="UniProtKB-UniRule"/>
</dbReference>
<dbReference type="GO" id="GO:0006226">
    <property type="term" value="P:dUMP biosynthetic process"/>
    <property type="evidence" value="ECO:0007669"/>
    <property type="project" value="UniProtKB-UniRule"/>
</dbReference>
<dbReference type="GO" id="GO:0046081">
    <property type="term" value="P:dUTP catabolic process"/>
    <property type="evidence" value="ECO:0007669"/>
    <property type="project" value="InterPro"/>
</dbReference>
<dbReference type="CDD" id="cd07557">
    <property type="entry name" value="trimeric_dUTPase"/>
    <property type="match status" value="1"/>
</dbReference>
<dbReference type="FunFam" id="2.70.40.10:FF:000002">
    <property type="entry name" value="dUTP diphosphatase"/>
    <property type="match status" value="1"/>
</dbReference>
<dbReference type="Gene3D" id="2.70.40.10">
    <property type="match status" value="1"/>
</dbReference>
<dbReference type="HAMAP" id="MF_00116">
    <property type="entry name" value="dUTPase_bact"/>
    <property type="match status" value="1"/>
</dbReference>
<dbReference type="InterPro" id="IPR008181">
    <property type="entry name" value="dUTPase"/>
</dbReference>
<dbReference type="InterPro" id="IPR029054">
    <property type="entry name" value="dUTPase-like"/>
</dbReference>
<dbReference type="InterPro" id="IPR036157">
    <property type="entry name" value="dUTPase-like_sf"/>
</dbReference>
<dbReference type="InterPro" id="IPR033704">
    <property type="entry name" value="dUTPase_trimeric"/>
</dbReference>
<dbReference type="NCBIfam" id="TIGR00576">
    <property type="entry name" value="dut"/>
    <property type="match status" value="1"/>
</dbReference>
<dbReference type="NCBIfam" id="NF001862">
    <property type="entry name" value="PRK00601.1"/>
    <property type="match status" value="1"/>
</dbReference>
<dbReference type="PANTHER" id="PTHR11241">
    <property type="entry name" value="DEOXYURIDINE 5'-TRIPHOSPHATE NUCLEOTIDOHYDROLASE"/>
    <property type="match status" value="1"/>
</dbReference>
<dbReference type="PANTHER" id="PTHR11241:SF0">
    <property type="entry name" value="DEOXYURIDINE 5'-TRIPHOSPHATE NUCLEOTIDOHYDROLASE"/>
    <property type="match status" value="1"/>
</dbReference>
<dbReference type="Pfam" id="PF00692">
    <property type="entry name" value="dUTPase"/>
    <property type="match status" value="1"/>
</dbReference>
<dbReference type="SUPFAM" id="SSF51283">
    <property type="entry name" value="dUTPase-like"/>
    <property type="match status" value="1"/>
</dbReference>
<keyword id="KW-0378">Hydrolase</keyword>
<keyword id="KW-0460">Magnesium</keyword>
<keyword id="KW-0479">Metal-binding</keyword>
<keyword id="KW-0546">Nucleotide metabolism</keyword>
<keyword id="KW-1185">Reference proteome</keyword>
<proteinExistence type="inferred from homology"/>
<reference key="1">
    <citation type="journal article" date="2006" name="J. Bacteriol.">
        <title>Comparison of the genome sequence of the poultry pathogen Bordetella avium with those of B. bronchiseptica, B. pertussis, and B. parapertussis reveals extensive diversity in surface structures associated with host interaction.</title>
        <authorList>
            <person name="Sebaihia M."/>
            <person name="Preston A."/>
            <person name="Maskell D.J."/>
            <person name="Kuzmiak H."/>
            <person name="Connell T.D."/>
            <person name="King N.D."/>
            <person name="Orndorff P.E."/>
            <person name="Miyamoto D.M."/>
            <person name="Thomson N.R."/>
            <person name="Harris D."/>
            <person name="Goble A."/>
            <person name="Lord A."/>
            <person name="Murphy L."/>
            <person name="Quail M.A."/>
            <person name="Rutter S."/>
            <person name="Squares R."/>
            <person name="Squares S."/>
            <person name="Woodward J."/>
            <person name="Parkhill J."/>
            <person name="Temple L.M."/>
        </authorList>
    </citation>
    <scope>NUCLEOTIDE SEQUENCE [LARGE SCALE GENOMIC DNA]</scope>
    <source>
        <strain>197N</strain>
    </source>
</reference>
<feature type="chain" id="PRO_1000015446" description="Deoxyuridine 5'-triphosphate nucleotidohydrolase">
    <location>
        <begin position="1"/>
        <end position="149"/>
    </location>
</feature>
<feature type="binding site" evidence="1">
    <location>
        <begin position="68"/>
        <end position="70"/>
    </location>
    <ligand>
        <name>substrate</name>
    </ligand>
</feature>
<feature type="binding site" evidence="1">
    <location>
        <position position="81"/>
    </location>
    <ligand>
        <name>substrate</name>
    </ligand>
</feature>
<feature type="binding site" evidence="1">
    <location>
        <begin position="85"/>
        <end position="87"/>
    </location>
    <ligand>
        <name>substrate</name>
    </ligand>
</feature>
<feature type="binding site" evidence="1">
    <location>
        <position position="95"/>
    </location>
    <ligand>
        <name>substrate</name>
    </ligand>
</feature>
<gene>
    <name evidence="1" type="primary">dut</name>
    <name type="ordered locus">BAV1402</name>
</gene>